<proteinExistence type="inferred from homology"/>
<gene>
    <name evidence="1" type="primary">rplE</name>
    <name type="ordered locus">Sama_0225</name>
</gene>
<comment type="function">
    <text evidence="1">This is one of the proteins that bind and probably mediate the attachment of the 5S RNA into the large ribosomal subunit, where it forms part of the central protuberance. In the 70S ribosome it contacts protein S13 of the 30S subunit (bridge B1b), connecting the 2 subunits; this bridge is implicated in subunit movement. Contacts the P site tRNA; the 5S rRNA and some of its associated proteins might help stabilize positioning of ribosome-bound tRNAs.</text>
</comment>
<comment type="subunit">
    <text evidence="1">Part of the 50S ribosomal subunit; part of the 5S rRNA/L5/L18/L25 subcomplex. Contacts the 5S rRNA and the P site tRNA. Forms a bridge to the 30S subunit in the 70S ribosome.</text>
</comment>
<comment type="similarity">
    <text evidence="1">Belongs to the universal ribosomal protein uL5 family.</text>
</comment>
<evidence type="ECO:0000255" key="1">
    <source>
        <dbReference type="HAMAP-Rule" id="MF_01333"/>
    </source>
</evidence>
<evidence type="ECO:0000305" key="2"/>
<organism>
    <name type="scientific">Shewanella amazonensis (strain ATCC BAA-1098 / SB2B)</name>
    <dbReference type="NCBI Taxonomy" id="326297"/>
    <lineage>
        <taxon>Bacteria</taxon>
        <taxon>Pseudomonadati</taxon>
        <taxon>Pseudomonadota</taxon>
        <taxon>Gammaproteobacteria</taxon>
        <taxon>Alteromonadales</taxon>
        <taxon>Shewanellaceae</taxon>
        <taxon>Shewanella</taxon>
    </lineage>
</organism>
<reference key="1">
    <citation type="submission" date="2006-12" db="EMBL/GenBank/DDBJ databases">
        <title>Complete sequence of Shewanella amazonensis SB2B.</title>
        <authorList>
            <consortium name="US DOE Joint Genome Institute"/>
            <person name="Copeland A."/>
            <person name="Lucas S."/>
            <person name="Lapidus A."/>
            <person name="Barry K."/>
            <person name="Detter J.C."/>
            <person name="Glavina del Rio T."/>
            <person name="Hammon N."/>
            <person name="Israni S."/>
            <person name="Dalin E."/>
            <person name="Tice H."/>
            <person name="Pitluck S."/>
            <person name="Munk A.C."/>
            <person name="Brettin T."/>
            <person name="Bruce D."/>
            <person name="Han C."/>
            <person name="Tapia R."/>
            <person name="Gilna P."/>
            <person name="Schmutz J."/>
            <person name="Larimer F."/>
            <person name="Land M."/>
            <person name="Hauser L."/>
            <person name="Kyrpides N."/>
            <person name="Mikhailova N."/>
            <person name="Fredrickson J."/>
            <person name="Richardson P."/>
        </authorList>
    </citation>
    <scope>NUCLEOTIDE SEQUENCE [LARGE SCALE GENOMIC DNA]</scope>
    <source>
        <strain>ATCC BAA-1098 / SB2B</strain>
    </source>
</reference>
<protein>
    <recommendedName>
        <fullName evidence="1">Large ribosomal subunit protein uL5</fullName>
    </recommendedName>
    <alternativeName>
        <fullName evidence="2">50S ribosomal protein L5</fullName>
    </alternativeName>
</protein>
<sequence>MAKLHDKYKETVIAELSKKFGYTSVMQVPRIEKITLNMGVGEAVADKKIMENAVRDMTAIAGQKPVVTVARKSVAGFKIREGYPIGCKVTLRGERMWEFFERLLDIAIPRIRDFRGLSAKSFDGRGNYAMGVREQIIFPEIDYDKIDRVRGMDIVITTTAKNDEEGRALLDAFNFPFKK</sequence>
<keyword id="KW-1185">Reference proteome</keyword>
<keyword id="KW-0687">Ribonucleoprotein</keyword>
<keyword id="KW-0689">Ribosomal protein</keyword>
<keyword id="KW-0694">RNA-binding</keyword>
<keyword id="KW-0699">rRNA-binding</keyword>
<keyword id="KW-0820">tRNA-binding</keyword>
<feature type="chain" id="PRO_1000052819" description="Large ribosomal subunit protein uL5">
    <location>
        <begin position="1"/>
        <end position="179"/>
    </location>
</feature>
<accession>A1S230</accession>
<dbReference type="EMBL" id="CP000507">
    <property type="protein sequence ID" value="ABL98436.1"/>
    <property type="molecule type" value="Genomic_DNA"/>
</dbReference>
<dbReference type="RefSeq" id="WP_011758346.1">
    <property type="nucleotide sequence ID" value="NC_008700.1"/>
</dbReference>
<dbReference type="SMR" id="A1S230"/>
<dbReference type="STRING" id="326297.Sama_0225"/>
<dbReference type="KEGG" id="saz:Sama_0225"/>
<dbReference type="eggNOG" id="COG0094">
    <property type="taxonomic scope" value="Bacteria"/>
</dbReference>
<dbReference type="HOGENOM" id="CLU_061015_2_1_6"/>
<dbReference type="OrthoDB" id="9806626at2"/>
<dbReference type="Proteomes" id="UP000009175">
    <property type="component" value="Chromosome"/>
</dbReference>
<dbReference type="GO" id="GO:1990904">
    <property type="term" value="C:ribonucleoprotein complex"/>
    <property type="evidence" value="ECO:0007669"/>
    <property type="project" value="UniProtKB-KW"/>
</dbReference>
<dbReference type="GO" id="GO:0005840">
    <property type="term" value="C:ribosome"/>
    <property type="evidence" value="ECO:0007669"/>
    <property type="project" value="UniProtKB-KW"/>
</dbReference>
<dbReference type="GO" id="GO:0019843">
    <property type="term" value="F:rRNA binding"/>
    <property type="evidence" value="ECO:0007669"/>
    <property type="project" value="UniProtKB-UniRule"/>
</dbReference>
<dbReference type="GO" id="GO:0003735">
    <property type="term" value="F:structural constituent of ribosome"/>
    <property type="evidence" value="ECO:0007669"/>
    <property type="project" value="InterPro"/>
</dbReference>
<dbReference type="GO" id="GO:0000049">
    <property type="term" value="F:tRNA binding"/>
    <property type="evidence" value="ECO:0007669"/>
    <property type="project" value="UniProtKB-UniRule"/>
</dbReference>
<dbReference type="GO" id="GO:0006412">
    <property type="term" value="P:translation"/>
    <property type="evidence" value="ECO:0007669"/>
    <property type="project" value="UniProtKB-UniRule"/>
</dbReference>
<dbReference type="FunFam" id="3.30.1440.10:FF:000001">
    <property type="entry name" value="50S ribosomal protein L5"/>
    <property type="match status" value="1"/>
</dbReference>
<dbReference type="Gene3D" id="3.30.1440.10">
    <property type="match status" value="1"/>
</dbReference>
<dbReference type="HAMAP" id="MF_01333_B">
    <property type="entry name" value="Ribosomal_uL5_B"/>
    <property type="match status" value="1"/>
</dbReference>
<dbReference type="InterPro" id="IPR002132">
    <property type="entry name" value="Ribosomal_uL5"/>
</dbReference>
<dbReference type="InterPro" id="IPR020930">
    <property type="entry name" value="Ribosomal_uL5_bac-type"/>
</dbReference>
<dbReference type="InterPro" id="IPR031309">
    <property type="entry name" value="Ribosomal_uL5_C"/>
</dbReference>
<dbReference type="InterPro" id="IPR020929">
    <property type="entry name" value="Ribosomal_uL5_CS"/>
</dbReference>
<dbReference type="InterPro" id="IPR022803">
    <property type="entry name" value="Ribosomal_uL5_dom_sf"/>
</dbReference>
<dbReference type="InterPro" id="IPR031310">
    <property type="entry name" value="Ribosomal_uL5_N"/>
</dbReference>
<dbReference type="NCBIfam" id="NF000585">
    <property type="entry name" value="PRK00010.1"/>
    <property type="match status" value="1"/>
</dbReference>
<dbReference type="PANTHER" id="PTHR11994">
    <property type="entry name" value="60S RIBOSOMAL PROTEIN L11-RELATED"/>
    <property type="match status" value="1"/>
</dbReference>
<dbReference type="Pfam" id="PF00281">
    <property type="entry name" value="Ribosomal_L5"/>
    <property type="match status" value="1"/>
</dbReference>
<dbReference type="Pfam" id="PF00673">
    <property type="entry name" value="Ribosomal_L5_C"/>
    <property type="match status" value="1"/>
</dbReference>
<dbReference type="PIRSF" id="PIRSF002161">
    <property type="entry name" value="Ribosomal_L5"/>
    <property type="match status" value="1"/>
</dbReference>
<dbReference type="SUPFAM" id="SSF55282">
    <property type="entry name" value="RL5-like"/>
    <property type="match status" value="1"/>
</dbReference>
<dbReference type="PROSITE" id="PS00358">
    <property type="entry name" value="RIBOSOMAL_L5"/>
    <property type="match status" value="1"/>
</dbReference>
<name>RL5_SHEAM</name>